<proteinExistence type="evidence at protein level"/>
<gene>
    <name evidence="6" type="primary">PEX6</name>
    <name evidence="5" type="synonym">PAS5</name>
</gene>
<evidence type="ECO:0000250" key="1">
    <source>
        <dbReference type="UniProtKB" id="P24004"/>
    </source>
</evidence>
<evidence type="ECO:0000250" key="2">
    <source>
        <dbReference type="UniProtKB" id="P33760"/>
    </source>
</evidence>
<evidence type="ECO:0000269" key="3">
    <source>
    </source>
</evidence>
<evidence type="ECO:0000269" key="4">
    <source>
    </source>
</evidence>
<evidence type="ECO:0000303" key="5">
    <source>
    </source>
</evidence>
<evidence type="ECO:0000303" key="6">
    <source>
    </source>
</evidence>
<evidence type="ECO:0000305" key="7"/>
<dbReference type="EC" id="3.6.4.-" evidence="2"/>
<dbReference type="EMBL" id="Z22556">
    <property type="protein sequence ID" value="CAA80278.1"/>
    <property type="molecule type" value="Genomic_DNA"/>
</dbReference>
<dbReference type="PIR" id="A48667">
    <property type="entry name" value="A48667"/>
</dbReference>
<dbReference type="SMR" id="P33289"/>
<dbReference type="GO" id="GO:0005829">
    <property type="term" value="C:cytosol"/>
    <property type="evidence" value="ECO:0007669"/>
    <property type="project" value="TreeGrafter"/>
</dbReference>
<dbReference type="GO" id="GO:0005778">
    <property type="term" value="C:peroxisomal membrane"/>
    <property type="evidence" value="ECO:0007669"/>
    <property type="project" value="TreeGrafter"/>
</dbReference>
<dbReference type="GO" id="GO:0005524">
    <property type="term" value="F:ATP binding"/>
    <property type="evidence" value="ECO:0007669"/>
    <property type="project" value="UniProtKB-KW"/>
</dbReference>
<dbReference type="GO" id="GO:0016887">
    <property type="term" value="F:ATP hydrolysis activity"/>
    <property type="evidence" value="ECO:0007669"/>
    <property type="project" value="InterPro"/>
</dbReference>
<dbReference type="GO" id="GO:0016558">
    <property type="term" value="P:protein import into peroxisome matrix"/>
    <property type="evidence" value="ECO:0007669"/>
    <property type="project" value="TreeGrafter"/>
</dbReference>
<dbReference type="CDD" id="cd19527">
    <property type="entry name" value="RecA-like_PEX6_r2"/>
    <property type="match status" value="1"/>
</dbReference>
<dbReference type="FunFam" id="3.40.50.300:FF:000109">
    <property type="entry name" value="Peroxisomal biogenesis factor 6"/>
    <property type="match status" value="1"/>
</dbReference>
<dbReference type="FunFam" id="1.10.8.60:FF:000039">
    <property type="entry name" value="peroxisome biogenesis factor 6"/>
    <property type="match status" value="1"/>
</dbReference>
<dbReference type="Gene3D" id="1.10.8.60">
    <property type="match status" value="1"/>
</dbReference>
<dbReference type="Gene3D" id="3.40.50.300">
    <property type="entry name" value="P-loop containing nucleotide triphosphate hydrolases"/>
    <property type="match status" value="2"/>
</dbReference>
<dbReference type="InterPro" id="IPR003593">
    <property type="entry name" value="AAA+_ATPase"/>
</dbReference>
<dbReference type="InterPro" id="IPR050168">
    <property type="entry name" value="AAA_ATPase_domain"/>
</dbReference>
<dbReference type="InterPro" id="IPR003959">
    <property type="entry name" value="ATPase_AAA_core"/>
</dbReference>
<dbReference type="InterPro" id="IPR003960">
    <property type="entry name" value="ATPase_AAA_CS"/>
</dbReference>
<dbReference type="InterPro" id="IPR027417">
    <property type="entry name" value="P-loop_NTPase"/>
</dbReference>
<dbReference type="InterPro" id="IPR056995">
    <property type="entry name" value="PEX6_4th_dom"/>
</dbReference>
<dbReference type="InterPro" id="IPR047533">
    <property type="entry name" value="RecA-like_PEX6_r2"/>
</dbReference>
<dbReference type="PANTHER" id="PTHR23077">
    <property type="entry name" value="AAA-FAMILY ATPASE"/>
    <property type="match status" value="1"/>
</dbReference>
<dbReference type="PANTHER" id="PTHR23077:SF9">
    <property type="entry name" value="PEROXISOMAL ATPASE PEX6"/>
    <property type="match status" value="1"/>
</dbReference>
<dbReference type="Pfam" id="PF00004">
    <property type="entry name" value="AAA"/>
    <property type="match status" value="2"/>
</dbReference>
<dbReference type="Pfam" id="PF23315">
    <property type="entry name" value="PEX6_4th"/>
    <property type="match status" value="1"/>
</dbReference>
<dbReference type="SMART" id="SM00382">
    <property type="entry name" value="AAA"/>
    <property type="match status" value="2"/>
</dbReference>
<dbReference type="SUPFAM" id="SSF52540">
    <property type="entry name" value="P-loop containing nucleoside triphosphate hydrolases"/>
    <property type="match status" value="2"/>
</dbReference>
<dbReference type="PROSITE" id="PS00674">
    <property type="entry name" value="AAA"/>
    <property type="match status" value="1"/>
</dbReference>
<sequence length="1165" mass="129137">MPGITETSQVTGPVLAHVIVTEDPYDASERAFLSTDLYELLFEDYANGSKSGLTLISIQLMGSSLFNEFQTFKVYESEEQLPPNTVNLCNMGNIIDYSSDFTVDSGYVARVDSLVKLDTVIISVLPEVYSLASQSQHQLVDILGGNDQHTVIRQGDYNKDINGKISLCEPTDQGFLESTTKIIVVKENSLNLPLLDQSQDGSLNYEENVKMNLEHSISNYFSLNSLDPENQITTTGVEFSVKCLDSPISVRKTAKSISVAHDSEDESSPKLVEEDISNEDTLLYAFCKTTELAKIGCLSGDIVKMKSGQCQCTTFECNCESCPVQYRYIRIHAFTDPNTYEKGCIYLNPILSFNLNNPKIVKLCPISIPDKRFELQGFHFSKFIPLAKQVTIARVSSPVTLDRTLQTLFLTNLKTYFESGRKVLSKDQLIPIPVDTLLAKSIFSTYEKLGVDDSQFPTVIPEGKPDAIAWFKVTEVSGELADSASQQFIIDPLKTKMMQSGVVSCSPPKNSQHCNWANYLGCGQMFSFPNVSGVTTSTFEYAKTLRKLIKATIDPSRLVNLQTTVLLSSLSRAIGKSLLVHSLALECGVHLVEIDGYEVLNPSSESKTIGTIRGKLDRVVEGCTPLIVFIKHIEALTKKSEQQQKDSLAVKINELIDEYTAKPGVLFVASTNDSDNLSDELRAKFKFEIVLGVPSEQERTLIFKYLIDFDQKTTPKVTEGTRELSFAPRNDLSLSSLSLQSAGLTPRDLISIVENAKTLAVDRVESLAKHHNVSFENMVYSSGGYIKFTPEDVEKSINTARNKFSDSIGAPRIPNVKWEDVGGLDVVKDEILDTIDMPMKHPELFSNGIKKRSGILFYGPPGTGKTLLAKAIATNFALNFFSVKGPELLNMYIGESEANVRKVFQRARDAKPCVVFFDELDSVAPKRGNQGDSEGVMDRIVSQLLAELDGMSGGDGGDGVFVVGATNRPDLLDEALLRPGRFDKMLYLGVSDTHEKQSKIMEALSRKFHLHPSVDLDKVAESCPFTFTGADFYALCSDAMLNAMTRIANTVDEKIKRYNEELPEKSQVSTRWWFDNVATKEDIDVLVTLEDFDKSRKELVPSVSAEELDHYLRVRQNFEGGKEKKVVQENGQTEHFSNGSANNHITFGDEQVVEAIDENGNSIIA</sequence>
<feature type="chain" id="PRO_0000084618" description="Peroxisomal ATPase PEX6">
    <location>
        <begin position="1"/>
        <end position="1165"/>
    </location>
</feature>
<organism>
    <name type="scientific">Komagataella pastoris</name>
    <name type="common">Yeast</name>
    <name type="synonym">Pichia pastoris</name>
    <dbReference type="NCBI Taxonomy" id="4922"/>
    <lineage>
        <taxon>Eukaryota</taxon>
        <taxon>Fungi</taxon>
        <taxon>Dikarya</taxon>
        <taxon>Ascomycota</taxon>
        <taxon>Saccharomycotina</taxon>
        <taxon>Pichiomycetes</taxon>
        <taxon>Pichiales</taxon>
        <taxon>Pichiaceae</taxon>
        <taxon>Komagataella</taxon>
    </lineage>
</organism>
<accession>P33289</accession>
<keyword id="KW-0067">ATP-binding</keyword>
<keyword id="KW-0378">Hydrolase</keyword>
<keyword id="KW-0472">Membrane</keyword>
<keyword id="KW-0547">Nucleotide-binding</keyword>
<keyword id="KW-0962">Peroxisome biogenesis</keyword>
<protein>
    <recommendedName>
        <fullName evidence="6">Peroxisomal ATPase PEX6</fullName>
        <ecNumber evidence="2">3.6.4.-</ecNumber>
    </recommendedName>
    <alternativeName>
        <fullName evidence="6">Peroxin-6</fullName>
    </alternativeName>
    <alternativeName>
        <fullName evidence="6">Peroxisomal biogenesis factor 6</fullName>
    </alternativeName>
    <alternativeName>
        <fullName evidence="5">Peroxisome biosynthesis protein PAS5</fullName>
    </alternativeName>
</protein>
<name>PEX6_PICPA</name>
<comment type="function">
    <text evidence="1 3 4">Component of the PEX1-PEX6 AAA ATPase complex involved in peroxisome biosynthesis (PubMed:8227124, PubMed:9447990). The complex acts as a protein dislocase complex that mediates the ATP-dependent extraction of the PEX5 receptor from peroxisomal membranes, an essential step for PEX5 recycling. Specifically recognizes PEX5 monoubiquitinated at 'Cys-6', and pulls it out of the peroxisome lumen through the PEX2-PEX10-PEX12 retrotranslocation channel. Extraction by the PEX1-PEX6 AAA ATPase complex is accompanied by unfolding of the TPR repeats and release of bound cargo from PEX5 (By similarity).</text>
</comment>
<comment type="catalytic activity">
    <reaction evidence="1">
        <text>ATP + H2O = ADP + phosphate + H(+)</text>
        <dbReference type="Rhea" id="RHEA:13065"/>
        <dbReference type="ChEBI" id="CHEBI:15377"/>
        <dbReference type="ChEBI" id="CHEBI:15378"/>
        <dbReference type="ChEBI" id="CHEBI:30616"/>
        <dbReference type="ChEBI" id="CHEBI:43474"/>
        <dbReference type="ChEBI" id="CHEBI:456216"/>
    </reaction>
    <physiologicalReaction direction="left-to-right" evidence="1">
        <dbReference type="Rhea" id="RHEA:13066"/>
    </physiologicalReaction>
</comment>
<comment type="subunit">
    <text evidence="4">Interacts with PEX1; forming the PEX1-PEX6 AAA ATPase complex, which is composed of a heterohexamer formed by a trimer of PEX1-PEX6 dimers.</text>
</comment>
<comment type="subcellular location">
    <subcellularLocation>
        <location evidence="4">Membrane</location>
        <topology evidence="4">Peripheral membrane protein</topology>
    </subcellularLocation>
    <text evidence="4">Associated with membranous subcellular structures distinct from mature peroxisomes.</text>
</comment>
<comment type="disruption phenotype">
    <text evidence="3">Leads to a peroxisomal-deficient phenotype with the absence of peroxisomes and the accumulation of aberrant peroxisomal structures resembling 'membranous ghosts'.</text>
</comment>
<comment type="similarity">
    <text evidence="7">Belongs to the AAA ATPase family.</text>
</comment>
<reference key="1">
    <citation type="journal article" date="1993" name="J. Cell Biol.">
        <title>Cloning and characterization of PAS5: a gene required for peroxisome biogenesis in the methylotrophic yeast Pichia pastoris.</title>
        <authorList>
            <person name="Spong A.P."/>
            <person name="Subramani S."/>
        </authorList>
    </citation>
    <scope>NUCLEOTIDE SEQUENCE [GENOMIC DNA]</scope>
    <scope>FUNCTION</scope>
    <scope>DISRUPTION PHENOTYPE</scope>
    <source>
        <strain>ATCC 76273 / CBS 7435 / CECT 11407 / NRRL Y-11430</strain>
    </source>
</reference>
<reference key="2">
    <citation type="journal article" date="1998" name="Mol. Cell. Biol.">
        <title>Two AAA family peroxins, PpPex1p and PpPex6p, interact with each other in an ATP-dependent manner and are associated with different subcellular membranous structures distinct from peroxisomes.</title>
        <authorList>
            <person name="Faber K.N."/>
            <person name="Heyman J.A."/>
            <person name="Subramani S."/>
        </authorList>
    </citation>
    <scope>FUNCTION</scope>
    <scope>INTERACTION WITH PEX1</scope>
    <scope>SUBCELLULAR LOCATION</scope>
</reference>